<organism>
    <name type="scientific">Danio rerio</name>
    <name type="common">Zebrafish</name>
    <name type="synonym">Brachydanio rerio</name>
    <dbReference type="NCBI Taxonomy" id="7955"/>
    <lineage>
        <taxon>Eukaryota</taxon>
        <taxon>Metazoa</taxon>
        <taxon>Chordata</taxon>
        <taxon>Craniata</taxon>
        <taxon>Vertebrata</taxon>
        <taxon>Euteleostomi</taxon>
        <taxon>Actinopterygii</taxon>
        <taxon>Neopterygii</taxon>
        <taxon>Teleostei</taxon>
        <taxon>Ostariophysi</taxon>
        <taxon>Cypriniformes</taxon>
        <taxon>Danionidae</taxon>
        <taxon>Danioninae</taxon>
        <taxon>Danio</taxon>
    </lineage>
</organism>
<gene>
    <name evidence="4" type="primary">tmem41ab</name>
    <name type="ORF">si:dkey-22o12.1</name>
    <name type="ORF">si:dkey-24b15.3</name>
    <name type="ORF">zgc:85616</name>
</gene>
<keyword id="KW-0472">Membrane</keyword>
<keyword id="KW-1185">Reference proteome</keyword>
<keyword id="KW-0732">Signal</keyword>
<keyword id="KW-0812">Transmembrane</keyword>
<keyword id="KW-1133">Transmembrane helix</keyword>
<dbReference type="EMBL" id="BC068328">
    <property type="protein sequence ID" value="AAH68328.1"/>
    <property type="molecule type" value="mRNA"/>
</dbReference>
<dbReference type="EMBL" id="BX088533">
    <property type="protein sequence ID" value="CAK10812.1"/>
    <property type="molecule type" value="Genomic_DNA"/>
</dbReference>
<dbReference type="EMBL" id="CR382370">
    <property type="protein sequence ID" value="CAQ13888.1"/>
    <property type="molecule type" value="Genomic_DNA"/>
</dbReference>
<dbReference type="RefSeq" id="NP_998248.1">
    <property type="nucleotide sequence ID" value="NM_213083.1"/>
</dbReference>
<dbReference type="FunCoup" id="Q6NV38">
    <property type="interactions" value="23"/>
</dbReference>
<dbReference type="STRING" id="7955.ENSDARP00000039201"/>
<dbReference type="PaxDb" id="7955-ENSDARP00000039201"/>
<dbReference type="Ensembl" id="ENSDART00000033024">
    <property type="protein sequence ID" value="ENSDARP00000039201"/>
    <property type="gene ID" value="ENSDARG00000026771"/>
</dbReference>
<dbReference type="GeneID" id="406356"/>
<dbReference type="KEGG" id="dre:406356"/>
<dbReference type="AGR" id="ZFIN:ZDB-GENE-040426-2050"/>
<dbReference type="CTD" id="406356"/>
<dbReference type="ZFIN" id="ZDB-GENE-040426-2050">
    <property type="gene designation" value="tmem41ab"/>
</dbReference>
<dbReference type="eggNOG" id="KOG3140">
    <property type="taxonomic scope" value="Eukaryota"/>
</dbReference>
<dbReference type="HOGENOM" id="CLU_038944_0_2_1"/>
<dbReference type="InParanoid" id="Q6NV38"/>
<dbReference type="OMA" id="MPEADYE"/>
<dbReference type="OrthoDB" id="3364966at2759"/>
<dbReference type="PhylomeDB" id="Q6NV38"/>
<dbReference type="TreeFam" id="TF314301"/>
<dbReference type="PRO" id="PR:Q6NV38"/>
<dbReference type="Proteomes" id="UP000000437">
    <property type="component" value="Alternate scaffold 1"/>
</dbReference>
<dbReference type="Proteomes" id="UP000000437">
    <property type="component" value="Chromosome 1"/>
</dbReference>
<dbReference type="Bgee" id="ENSDARG00000026771">
    <property type="expression patterns" value="Expressed in muscle tissue and 8 other cell types or tissues"/>
</dbReference>
<dbReference type="GO" id="GO:0016020">
    <property type="term" value="C:membrane"/>
    <property type="evidence" value="ECO:0007669"/>
    <property type="project" value="UniProtKB-SubCell"/>
</dbReference>
<dbReference type="InterPro" id="IPR045014">
    <property type="entry name" value="TM41A/B"/>
</dbReference>
<dbReference type="InterPro" id="IPR032816">
    <property type="entry name" value="VTT_dom"/>
</dbReference>
<dbReference type="PANTHER" id="PTHR43220">
    <property type="match status" value="1"/>
</dbReference>
<dbReference type="PANTHER" id="PTHR43220:SF21">
    <property type="entry name" value="TRANSMEMBRANE PROTEIN 41A"/>
    <property type="match status" value="1"/>
</dbReference>
<dbReference type="Pfam" id="PF09335">
    <property type="entry name" value="VTT_dom"/>
    <property type="match status" value="1"/>
</dbReference>
<reference evidence="3" key="1">
    <citation type="submission" date="2004-04" db="EMBL/GenBank/DDBJ databases">
        <authorList>
            <consortium name="NIH - Zebrafish Gene Collection (ZGC) project"/>
        </authorList>
    </citation>
    <scope>NUCLEOTIDE SEQUENCE [LARGE SCALE MRNA]</scope>
    <source>
        <tissue evidence="3">Kidney</tissue>
    </source>
</reference>
<reference key="2">
    <citation type="journal article" date="2013" name="Nature">
        <title>The zebrafish reference genome sequence and its relationship to the human genome.</title>
        <authorList>
            <person name="Howe K."/>
            <person name="Clark M.D."/>
            <person name="Torroja C.F."/>
            <person name="Torrance J."/>
            <person name="Berthelot C."/>
            <person name="Muffato M."/>
            <person name="Collins J.E."/>
            <person name="Humphray S."/>
            <person name="McLaren K."/>
            <person name="Matthews L."/>
            <person name="McLaren S."/>
            <person name="Sealy I."/>
            <person name="Caccamo M."/>
            <person name="Churcher C."/>
            <person name="Scott C."/>
            <person name="Barrett J.C."/>
            <person name="Koch R."/>
            <person name="Rauch G.J."/>
            <person name="White S."/>
            <person name="Chow W."/>
            <person name="Kilian B."/>
            <person name="Quintais L.T."/>
            <person name="Guerra-Assuncao J.A."/>
            <person name="Zhou Y."/>
            <person name="Gu Y."/>
            <person name="Yen J."/>
            <person name="Vogel J.H."/>
            <person name="Eyre T."/>
            <person name="Redmond S."/>
            <person name="Banerjee R."/>
            <person name="Chi J."/>
            <person name="Fu B."/>
            <person name="Langley E."/>
            <person name="Maguire S.F."/>
            <person name="Laird G.K."/>
            <person name="Lloyd D."/>
            <person name="Kenyon E."/>
            <person name="Donaldson S."/>
            <person name="Sehra H."/>
            <person name="Almeida-King J."/>
            <person name="Loveland J."/>
            <person name="Trevanion S."/>
            <person name="Jones M."/>
            <person name="Quail M."/>
            <person name="Willey D."/>
            <person name="Hunt A."/>
            <person name="Burton J."/>
            <person name="Sims S."/>
            <person name="McLay K."/>
            <person name="Plumb B."/>
            <person name="Davis J."/>
            <person name="Clee C."/>
            <person name="Oliver K."/>
            <person name="Clark R."/>
            <person name="Riddle C."/>
            <person name="Elliot D."/>
            <person name="Threadgold G."/>
            <person name="Harden G."/>
            <person name="Ware D."/>
            <person name="Begum S."/>
            <person name="Mortimore B."/>
            <person name="Kerry G."/>
            <person name="Heath P."/>
            <person name="Phillimore B."/>
            <person name="Tracey A."/>
            <person name="Corby N."/>
            <person name="Dunn M."/>
            <person name="Johnson C."/>
            <person name="Wood J."/>
            <person name="Clark S."/>
            <person name="Pelan S."/>
            <person name="Griffiths G."/>
            <person name="Smith M."/>
            <person name="Glithero R."/>
            <person name="Howden P."/>
            <person name="Barker N."/>
            <person name="Lloyd C."/>
            <person name="Stevens C."/>
            <person name="Harley J."/>
            <person name="Holt K."/>
            <person name="Panagiotidis G."/>
            <person name="Lovell J."/>
            <person name="Beasley H."/>
            <person name="Henderson C."/>
            <person name="Gordon D."/>
            <person name="Auger K."/>
            <person name="Wright D."/>
            <person name="Collins J."/>
            <person name="Raisen C."/>
            <person name="Dyer L."/>
            <person name="Leung K."/>
            <person name="Robertson L."/>
            <person name="Ambridge K."/>
            <person name="Leongamornlert D."/>
            <person name="McGuire S."/>
            <person name="Gilderthorp R."/>
            <person name="Griffiths C."/>
            <person name="Manthravadi D."/>
            <person name="Nichol S."/>
            <person name="Barker G."/>
            <person name="Whitehead S."/>
            <person name="Kay M."/>
            <person name="Brown J."/>
            <person name="Murnane C."/>
            <person name="Gray E."/>
            <person name="Humphries M."/>
            <person name="Sycamore N."/>
            <person name="Barker D."/>
            <person name="Saunders D."/>
            <person name="Wallis J."/>
            <person name="Babbage A."/>
            <person name="Hammond S."/>
            <person name="Mashreghi-Mohammadi M."/>
            <person name="Barr L."/>
            <person name="Martin S."/>
            <person name="Wray P."/>
            <person name="Ellington A."/>
            <person name="Matthews N."/>
            <person name="Ellwood M."/>
            <person name="Woodmansey R."/>
            <person name="Clark G."/>
            <person name="Cooper J."/>
            <person name="Tromans A."/>
            <person name="Grafham D."/>
            <person name="Skuce C."/>
            <person name="Pandian R."/>
            <person name="Andrews R."/>
            <person name="Harrison E."/>
            <person name="Kimberley A."/>
            <person name="Garnett J."/>
            <person name="Fosker N."/>
            <person name="Hall R."/>
            <person name="Garner P."/>
            <person name="Kelly D."/>
            <person name="Bird C."/>
            <person name="Palmer S."/>
            <person name="Gehring I."/>
            <person name="Berger A."/>
            <person name="Dooley C.M."/>
            <person name="Ersan-Urun Z."/>
            <person name="Eser C."/>
            <person name="Geiger H."/>
            <person name="Geisler M."/>
            <person name="Karotki L."/>
            <person name="Kirn A."/>
            <person name="Konantz J."/>
            <person name="Konantz M."/>
            <person name="Oberlander M."/>
            <person name="Rudolph-Geiger S."/>
            <person name="Teucke M."/>
            <person name="Lanz C."/>
            <person name="Raddatz G."/>
            <person name="Osoegawa K."/>
            <person name="Zhu B."/>
            <person name="Rapp A."/>
            <person name="Widaa S."/>
            <person name="Langford C."/>
            <person name="Yang F."/>
            <person name="Schuster S.C."/>
            <person name="Carter N.P."/>
            <person name="Harrow J."/>
            <person name="Ning Z."/>
            <person name="Herrero J."/>
            <person name="Searle S.M."/>
            <person name="Enright A."/>
            <person name="Geisler R."/>
            <person name="Plasterk R.H."/>
            <person name="Lee C."/>
            <person name="Westerfield M."/>
            <person name="de Jong P.J."/>
            <person name="Zon L.I."/>
            <person name="Postlethwait J.H."/>
            <person name="Nusslein-Volhard C."/>
            <person name="Hubbard T.J."/>
            <person name="Roest Crollius H."/>
            <person name="Rogers J."/>
            <person name="Stemple D.L."/>
        </authorList>
    </citation>
    <scope>NUCLEOTIDE SEQUENCE [LARGE SCALE GENOMIC DNA]</scope>
    <source>
        <strain>Tuebingen</strain>
    </source>
</reference>
<feature type="signal peptide" evidence="1">
    <location>
        <begin position="1"/>
        <end position="23"/>
    </location>
</feature>
<feature type="chain" id="PRO_0000378620" description="Transmembrane protein 41A-B" evidence="1">
    <location>
        <begin position="24"/>
        <end position="278"/>
    </location>
</feature>
<feature type="transmembrane region" description="Helical" evidence="1">
    <location>
        <begin position="78"/>
        <end position="98"/>
    </location>
</feature>
<feature type="transmembrane region" description="Helical" evidence="1">
    <location>
        <begin position="101"/>
        <end position="121"/>
    </location>
</feature>
<feature type="transmembrane region" description="Helical" evidence="1">
    <location>
        <begin position="164"/>
        <end position="184"/>
    </location>
</feature>
<feature type="transmembrane region" description="Helical" evidence="1">
    <location>
        <begin position="191"/>
        <end position="211"/>
    </location>
</feature>
<feature type="transmembrane region" description="Helical" evidence="1">
    <location>
        <begin position="230"/>
        <end position="250"/>
    </location>
</feature>
<feature type="sequence conflict" description="In Ref. 2; CAK10812." evidence="2" ref="2">
    <original>F</original>
    <variation>S</variation>
    <location>
        <position position="231"/>
    </location>
</feature>
<evidence type="ECO:0000255" key="1"/>
<evidence type="ECO:0000305" key="2"/>
<evidence type="ECO:0000312" key="3">
    <source>
        <dbReference type="EMBL" id="AAH68328.1"/>
    </source>
</evidence>
<evidence type="ECO:0000312" key="4">
    <source>
        <dbReference type="ZFIN" id="ZDB-GENE-040426-2050"/>
    </source>
</evidence>
<name>T41AB_DANRE</name>
<comment type="subcellular location">
    <subcellularLocation>
        <location evidence="1">Membrane</location>
        <topology evidence="1">Multi-pass membrane protein</topology>
    </subcellularLocation>
</comment>
<comment type="similarity">
    <text evidence="1">Belongs to the TMEM41 family.</text>
</comment>
<sequence length="278" mass="31759">MRSIWGLIVLVAAATFYLYLLSAFLPPGPRAIRVHDTGPEHTDDEPEEKVLRLKFPSDLEELRELAELLKFYKTEHTGYVFILFCSAYLYKQSFAIPGSSFLNMLSGALFGPLHGLIIACTLTTVGSTNCYLLSRTFGKRHIVRLFPEKVAMLQRMVEENRSSLFFFLLFLRFFPMTPNWFLNVTSPILNIPIPIFFFSILIGLIPYNFICVHTGAVLSEINSLDDIFSWFTLLQLLLIACVALLPGALIRRYSKDHLKLHGLEPNGHQKILNDRKTR</sequence>
<protein>
    <recommendedName>
        <fullName evidence="3">Transmembrane protein 41A-B</fullName>
    </recommendedName>
</protein>
<proteinExistence type="evidence at transcript level"/>
<accession>Q6NV38</accession>
<accession>Q1LY83</accession>